<feature type="chain" id="PRO_0000157816" description="GTPase ArgK">
    <location>
        <begin position="1"/>
        <end position="331"/>
    </location>
</feature>
<feature type="binding site" evidence="1">
    <location>
        <begin position="61"/>
        <end position="68"/>
    </location>
    <ligand>
        <name>ATP</name>
        <dbReference type="ChEBI" id="CHEBI:30616"/>
    </ligand>
</feature>
<feature type="sequence variant" description="In strain: RC101.">
    <original>S</original>
    <variation>R</variation>
    <location>
        <position position="68"/>
    </location>
</feature>
<feature type="sequence variant" description="In strain: RC101.">
    <original>T</original>
    <variation>A</variation>
    <location>
        <position position="154"/>
    </location>
</feature>
<feature type="turn" evidence="6">
    <location>
        <begin position="4"/>
        <end position="6"/>
    </location>
</feature>
<feature type="helix" evidence="6">
    <location>
        <begin position="7"/>
        <end position="15"/>
    </location>
</feature>
<feature type="helix" evidence="6">
    <location>
        <begin position="19"/>
        <end position="30"/>
    </location>
</feature>
<feature type="helix" evidence="6">
    <location>
        <begin position="34"/>
        <end position="47"/>
    </location>
</feature>
<feature type="helix" evidence="6">
    <location>
        <begin position="48"/>
        <end position="50"/>
    </location>
</feature>
<feature type="strand" evidence="6">
    <location>
        <begin position="54"/>
        <end position="61"/>
    </location>
</feature>
<feature type="helix" evidence="6">
    <location>
        <begin position="67"/>
        <end position="80"/>
    </location>
</feature>
<feature type="strand" evidence="6">
    <location>
        <begin position="85"/>
        <end position="90"/>
    </location>
</feature>
<feature type="turn" evidence="6">
    <location>
        <begin position="110"/>
        <end position="113"/>
    </location>
</feature>
<feature type="strand" evidence="6">
    <location>
        <begin position="117"/>
        <end position="122"/>
    </location>
</feature>
<feature type="helix" evidence="6">
    <location>
        <begin position="131"/>
        <end position="144"/>
    </location>
</feature>
<feature type="strand" evidence="6">
    <location>
        <begin position="148"/>
        <end position="155"/>
    </location>
</feature>
<feature type="helix" evidence="6">
    <location>
        <begin position="160"/>
        <end position="165"/>
    </location>
</feature>
<feature type="strand" evidence="6">
    <location>
        <begin position="169"/>
        <end position="175"/>
    </location>
</feature>
<feature type="helix" evidence="6">
    <location>
        <begin position="188"/>
        <end position="193"/>
    </location>
</feature>
<feature type="strand" evidence="6">
    <location>
        <begin position="195"/>
        <end position="199"/>
    </location>
</feature>
<feature type="helix" evidence="6">
    <location>
        <begin position="207"/>
        <end position="223"/>
    </location>
</feature>
<feature type="strand" evidence="6">
    <location>
        <begin position="234"/>
        <end position="237"/>
    </location>
</feature>
<feature type="turn" evidence="6">
    <location>
        <begin position="240"/>
        <end position="243"/>
    </location>
</feature>
<feature type="helix" evidence="6">
    <location>
        <begin position="246"/>
        <end position="262"/>
    </location>
</feature>
<feature type="helix" evidence="6">
    <location>
        <begin position="265"/>
        <end position="292"/>
    </location>
</feature>
<feature type="helix" evidence="6">
    <location>
        <begin position="294"/>
        <end position="308"/>
    </location>
</feature>
<feature type="helix" evidence="6">
    <location>
        <begin position="314"/>
        <end position="326"/>
    </location>
</feature>
<protein>
    <recommendedName>
        <fullName evidence="4">GTPase ArgK</fullName>
        <ecNumber evidence="2">3.6.5.-</ecNumber>
    </recommendedName>
    <alternativeName>
        <fullName evidence="3">G-protein chaperone</fullName>
    </alternativeName>
</protein>
<proteinExistence type="evidence at protein level"/>
<accession>P27254</accession>
<accession>Q2M9S4</accession>
<gene>
    <name type="primary">argK</name>
    <name type="synonym">ygfD</name>
    <name type="ordered locus">b2918</name>
    <name type="ordered locus">JW2885</name>
</gene>
<evidence type="ECO:0000255" key="1"/>
<evidence type="ECO:0000269" key="2">
    <source>
    </source>
</evidence>
<evidence type="ECO:0000305" key="3"/>
<evidence type="ECO:0000305" key="4">
    <source>
    </source>
</evidence>
<evidence type="ECO:0000305" key="5">
    <source>
    </source>
</evidence>
<evidence type="ECO:0007829" key="6">
    <source>
        <dbReference type="PDB" id="2P67"/>
    </source>
</evidence>
<reference key="1">
    <citation type="journal article" date="1998" name="J. Bacteriol.">
        <title>Phosphorylation of the periplasmic binding protein in two transport systems for arginine incorporation in Escherichia coli K-12 is unrelated to the function of the transport system.</title>
        <authorList>
            <person name="Celis R.T.F."/>
            <person name="Leadlay P.F."/>
            <person name="Roy I."/>
            <person name="Hansen A."/>
        </authorList>
    </citation>
    <scope>NUCLEOTIDE SEQUENCE [GENOMIC DNA]</scope>
    <scope>PRELIMINARY CHARACTERIZATION</scope>
    <source>
        <strain>K12</strain>
    </source>
</reference>
<reference key="2">
    <citation type="journal article" date="1997" name="Science">
        <title>The complete genome sequence of Escherichia coli K-12.</title>
        <authorList>
            <person name="Blattner F.R."/>
            <person name="Plunkett G. III"/>
            <person name="Bloch C.A."/>
            <person name="Perna N.T."/>
            <person name="Burland V."/>
            <person name="Riley M."/>
            <person name="Collado-Vides J."/>
            <person name="Glasner J.D."/>
            <person name="Rode C.K."/>
            <person name="Mayhew G.F."/>
            <person name="Gregor J."/>
            <person name="Davis N.W."/>
            <person name="Kirkpatrick H.A."/>
            <person name="Goeden M.A."/>
            <person name="Rose D.J."/>
            <person name="Mau B."/>
            <person name="Shao Y."/>
        </authorList>
    </citation>
    <scope>NUCLEOTIDE SEQUENCE [LARGE SCALE GENOMIC DNA]</scope>
    <source>
        <strain>K12 / MG1655 / ATCC 47076</strain>
    </source>
</reference>
<reference key="3">
    <citation type="journal article" date="2006" name="Mol. Syst. Biol.">
        <title>Highly accurate genome sequences of Escherichia coli K-12 strains MG1655 and W3110.</title>
        <authorList>
            <person name="Hayashi K."/>
            <person name="Morooka N."/>
            <person name="Yamamoto Y."/>
            <person name="Fujita K."/>
            <person name="Isono K."/>
            <person name="Choi S."/>
            <person name="Ohtsubo E."/>
            <person name="Baba T."/>
            <person name="Wanner B.L."/>
            <person name="Mori H."/>
            <person name="Horiuchi T."/>
        </authorList>
    </citation>
    <scope>NUCLEOTIDE SEQUENCE [LARGE SCALE GENOMIC DNA]</scope>
    <source>
        <strain>K12 / W3110 / ATCC 27325 / DSM 5911</strain>
    </source>
</reference>
<reference key="4">
    <citation type="journal article" date="2009" name="Microbiol. Res.">
        <title>Sleeping beauty mutase (sbm) is expressed and interacts with ygfd in Escherichia coli.</title>
        <authorList>
            <person name="Froese D.S."/>
            <person name="Dobson C.M."/>
            <person name="White A.P."/>
            <person name="Wu X."/>
            <person name="Padovani D."/>
            <person name="Banerjee R."/>
            <person name="Haller T."/>
            <person name="Gerlt J.A."/>
            <person name="Surette M.G."/>
            <person name="Gravel R.A."/>
        </authorList>
    </citation>
    <scope>FUNCTION</scope>
    <scope>GTPASE ACTIVITY</scope>
    <scope>SUBUNIT</scope>
    <scope>INTERACTION WITH SCPA</scope>
</reference>
<reference key="5">
    <citation type="submission" date="2009-02" db="PDB data bank">
        <title>Crystal structure of LAO/AO transport system kinase.</title>
        <authorList>
            <consortium name="New York structural genomix research consortium (NYSGXRC)"/>
        </authorList>
    </citation>
    <scope>X-RAY CRYSTALLOGRAPHY (1.8 ANGSTROMS)</scope>
</reference>
<comment type="function">
    <text evidence="2 3">Binds and hydrolyzes GTP (PubMed:18950999). Likely functions as a G-protein chaperone that assists AdoCbl cofactor delivery to the methylmalonyl-CoA mutase (MCM) ScpA and reactivation of the enzyme during catalysis.</text>
</comment>
<comment type="catalytic activity">
    <reaction evidence="2">
        <text>GTP + H2O = GDP + phosphate + H(+)</text>
        <dbReference type="Rhea" id="RHEA:19669"/>
        <dbReference type="ChEBI" id="CHEBI:15377"/>
        <dbReference type="ChEBI" id="CHEBI:15378"/>
        <dbReference type="ChEBI" id="CHEBI:37565"/>
        <dbReference type="ChEBI" id="CHEBI:43474"/>
        <dbReference type="ChEBI" id="CHEBI:58189"/>
    </reaction>
</comment>
<comment type="subunit">
    <text evidence="2">Monomer. Interacts with the methylmalonyl-CoA mutase ScpA.</text>
</comment>
<comment type="miscellaneous">
    <text evidence="4">Part of an operon that encodes enzymes converting succinate to propionate.</text>
</comment>
<comment type="similarity">
    <text evidence="3">Belongs to the SIMIBI class G3E GTPase family. ArgK/MeaB subfamily.</text>
</comment>
<comment type="caution">
    <text evidence="5">Was originally thought to be a membrane protein kinase involved in phosphorylation of the AO and LAO periplasmic-binding proteins (PubMed:9733684). However, its role needs to be reexamined.</text>
</comment>
<comment type="sequence caution" evidence="3">
    <conflict type="frameshift">
        <sequence resource="EMBL-CDS" id="CAA47312"/>
    </conflict>
</comment>
<name>ARGK_ECOLI</name>
<organism>
    <name type="scientific">Escherichia coli (strain K12)</name>
    <dbReference type="NCBI Taxonomy" id="83333"/>
    <lineage>
        <taxon>Bacteria</taxon>
        <taxon>Pseudomonadati</taxon>
        <taxon>Pseudomonadota</taxon>
        <taxon>Gammaproteobacteria</taxon>
        <taxon>Enterobacterales</taxon>
        <taxon>Enterobacteriaceae</taxon>
        <taxon>Escherichia</taxon>
    </lineage>
</organism>
<sequence>MINEATLAESIRRLRQGERATLAQAMTLVESRHPRHQALSTQLLDAIMPYCGNTLRLGVTGTPGAGKSTFLEAFGMLLIREGLKVAVIAVDPSSPVTGGSILGDKTRMNDLARAEAAFIRPVPSSGHLGGASQRARELMLLCEAAGYDVVIVETVGVGQSETEVARMVDCFISLQIAGGGDDLQGIKKGLMEVADLIVINKDDGDNHTNVAIARHMYESALHILRRKYDEWQPRVLTCSALEKRGIDEIWHAIIDFKTALTASGRLQQVRQQQSVEWLRKQTEEEVLNHLFANEDFDRYYRQTLLAVKNNTLSPRTGLRQLSEFIQTQYFD</sequence>
<keyword id="KW-0002">3D-structure</keyword>
<keyword id="KW-0067">ATP-binding</keyword>
<keyword id="KW-0342">GTP-binding</keyword>
<keyword id="KW-0378">Hydrolase</keyword>
<keyword id="KW-0547">Nucleotide-binding</keyword>
<keyword id="KW-1185">Reference proteome</keyword>
<dbReference type="EC" id="3.6.5.-" evidence="2"/>
<dbReference type="EMBL" id="X66836">
    <property type="protein sequence ID" value="CAA47312.1"/>
    <property type="status" value="ALT_FRAME"/>
    <property type="molecule type" value="Genomic_DNA"/>
</dbReference>
<dbReference type="EMBL" id="U28377">
    <property type="protein sequence ID" value="AAA69085.1"/>
    <property type="molecule type" value="Genomic_DNA"/>
</dbReference>
<dbReference type="EMBL" id="U00096">
    <property type="protein sequence ID" value="AAC75955.1"/>
    <property type="molecule type" value="Genomic_DNA"/>
</dbReference>
<dbReference type="EMBL" id="AP009048">
    <property type="protein sequence ID" value="BAE76982.1"/>
    <property type="molecule type" value="Genomic_DNA"/>
</dbReference>
<dbReference type="PIR" id="E65076">
    <property type="entry name" value="E65076"/>
</dbReference>
<dbReference type="RefSeq" id="NP_417393.1">
    <property type="nucleotide sequence ID" value="NC_000913.3"/>
</dbReference>
<dbReference type="PDB" id="2P67">
    <property type="method" value="X-ray"/>
    <property type="resolution" value="1.80 A"/>
    <property type="chains" value="A=2-331"/>
</dbReference>
<dbReference type="PDBsum" id="2P67"/>
<dbReference type="SMR" id="P27254"/>
<dbReference type="BioGRID" id="4259325">
    <property type="interactions" value="23"/>
</dbReference>
<dbReference type="BioGRID" id="851733">
    <property type="interactions" value="8"/>
</dbReference>
<dbReference type="FunCoup" id="P27254">
    <property type="interactions" value="562"/>
</dbReference>
<dbReference type="IntAct" id="P27254">
    <property type="interactions" value="13"/>
</dbReference>
<dbReference type="STRING" id="511145.b2918"/>
<dbReference type="PaxDb" id="511145-b2918"/>
<dbReference type="EnsemblBacteria" id="AAC75955">
    <property type="protein sequence ID" value="AAC75955"/>
    <property type="gene ID" value="b2918"/>
</dbReference>
<dbReference type="GeneID" id="947412"/>
<dbReference type="KEGG" id="ecj:JW2885"/>
<dbReference type="KEGG" id="eco:b2918"/>
<dbReference type="KEGG" id="ecoc:C3026_15990"/>
<dbReference type="PATRIC" id="fig|1411691.4.peg.3814"/>
<dbReference type="EchoBASE" id="EB1415"/>
<dbReference type="eggNOG" id="COG1703">
    <property type="taxonomic scope" value="Bacteria"/>
</dbReference>
<dbReference type="HOGENOM" id="CLU_043725_2_2_6"/>
<dbReference type="InParanoid" id="P27254"/>
<dbReference type="OMA" id="WMWERID"/>
<dbReference type="OrthoDB" id="9778292at2"/>
<dbReference type="PhylomeDB" id="P27254"/>
<dbReference type="BioCyc" id="EcoCyc:EG11445-MONOMER"/>
<dbReference type="BioCyc" id="MetaCyc:EG11445-MONOMER"/>
<dbReference type="EvolutionaryTrace" id="P27254"/>
<dbReference type="PRO" id="PR:P27254"/>
<dbReference type="Proteomes" id="UP000000625">
    <property type="component" value="Chromosome"/>
</dbReference>
<dbReference type="GO" id="GO:0005737">
    <property type="term" value="C:cytoplasm"/>
    <property type="evidence" value="ECO:0000318"/>
    <property type="project" value="GO_Central"/>
</dbReference>
<dbReference type="GO" id="GO:0005524">
    <property type="term" value="F:ATP binding"/>
    <property type="evidence" value="ECO:0007669"/>
    <property type="project" value="UniProtKB-KW"/>
</dbReference>
<dbReference type="GO" id="GO:0005525">
    <property type="term" value="F:GTP binding"/>
    <property type="evidence" value="ECO:0007669"/>
    <property type="project" value="UniProtKB-KW"/>
</dbReference>
<dbReference type="GO" id="GO:0003924">
    <property type="term" value="F:GTPase activity"/>
    <property type="evidence" value="ECO:0000314"/>
    <property type="project" value="EcoCyc"/>
</dbReference>
<dbReference type="CDD" id="cd03114">
    <property type="entry name" value="MMAA-like"/>
    <property type="match status" value="1"/>
</dbReference>
<dbReference type="FunFam" id="1.20.5.170:FF:000077">
    <property type="entry name" value="LAO/AO transport system kinase"/>
    <property type="match status" value="1"/>
</dbReference>
<dbReference type="FunFam" id="3.40.50.300:FF:000647">
    <property type="entry name" value="Methylmalonic aciduria type A homolog, mitochondrial"/>
    <property type="match status" value="1"/>
</dbReference>
<dbReference type="Gene3D" id="1.10.287.130">
    <property type="match status" value="1"/>
</dbReference>
<dbReference type="Gene3D" id="1.20.5.170">
    <property type="match status" value="1"/>
</dbReference>
<dbReference type="Gene3D" id="3.40.50.300">
    <property type="entry name" value="P-loop containing nucleotide triphosphate hydrolases"/>
    <property type="match status" value="1"/>
</dbReference>
<dbReference type="InterPro" id="IPR005129">
    <property type="entry name" value="GTPase_ArgK"/>
</dbReference>
<dbReference type="InterPro" id="IPR027417">
    <property type="entry name" value="P-loop_NTPase"/>
</dbReference>
<dbReference type="NCBIfam" id="TIGR00750">
    <property type="entry name" value="lao"/>
    <property type="match status" value="1"/>
</dbReference>
<dbReference type="NCBIfam" id="NF006958">
    <property type="entry name" value="PRK09435.1"/>
    <property type="match status" value="1"/>
</dbReference>
<dbReference type="PANTHER" id="PTHR23408:SF3">
    <property type="entry name" value="METHYLMALONIC ACIDURIA TYPE A PROTEIN, MITOCHONDRIAL"/>
    <property type="match status" value="1"/>
</dbReference>
<dbReference type="PANTHER" id="PTHR23408">
    <property type="entry name" value="METHYLMALONYL-COA MUTASE"/>
    <property type="match status" value="1"/>
</dbReference>
<dbReference type="Pfam" id="PF03308">
    <property type="entry name" value="MeaB"/>
    <property type="match status" value="1"/>
</dbReference>
<dbReference type="SUPFAM" id="SSF52540">
    <property type="entry name" value="P-loop containing nucleoside triphosphate hydrolases"/>
    <property type="match status" value="1"/>
</dbReference>